<reference key="1">
    <citation type="journal article" date="2006" name="Proc. Natl. Acad. Sci. U.S.A.">
        <title>Molecular genetic anatomy of inter- and intraserotype variation in the human bacterial pathogen group A Streptococcus.</title>
        <authorList>
            <person name="Beres S.B."/>
            <person name="Richter E.W."/>
            <person name="Nagiec M.J."/>
            <person name="Sumby P."/>
            <person name="Porcella S.F."/>
            <person name="DeLeo F.R."/>
            <person name="Musser J.M."/>
        </authorList>
    </citation>
    <scope>NUCLEOTIDE SEQUENCE [LARGE SCALE GENOMIC DNA]</scope>
    <source>
        <strain>MGAS10270</strain>
    </source>
</reference>
<gene>
    <name evidence="1" type="primary">atpA</name>
    <name type="ordered locus">MGAS10270_Spy0634</name>
</gene>
<feature type="chain" id="PRO_0000256117" description="ATP synthase subunit alpha">
    <location>
        <begin position="1"/>
        <end position="501"/>
    </location>
</feature>
<feature type="binding site" evidence="1">
    <location>
        <begin position="169"/>
        <end position="176"/>
    </location>
    <ligand>
        <name>ATP</name>
        <dbReference type="ChEBI" id="CHEBI:30616"/>
    </ligand>
</feature>
<feature type="site" description="Required for activity" evidence="1">
    <location>
        <position position="362"/>
    </location>
</feature>
<sequence>MAINAQEISALIKKQIENFQPNFDVTETGIVTYIGDGIARARGLDNAMSGELLEFENGAYGMAQNLESNDVGIIILGDFSAIREGDVVKRTGKIMEVPVGEALIGRVVNPLGQPVDGLGDIETTGFRPVETPAPGVMQRKSVSEPLQTGLKAIDALVPIGRGQRELIIGDRQTGKTSVAIDAILNQKGQDMICIYVAIGQKESTVRTQVETLRRYGALDYTIVVTASASQPSPLLFIAPYAGVAMAEEFMYQGKHVLIVYDDLSKQAVAYRELSLLLRRPPGREAYPGDVFYLHSRLLERSAKVSDDLGGGSITALPFIETQAGDISAYIATNVISITDGQIFLQENLFNSGIRPAIDAGSSVSRVGGSAQIKAMKKVAGTLRLDLASYRELEAFTQFGSDLDAATQAKLNRGRRTVEILKQPLHKPLPVEKQVVILYALTHGFLDDVPVDDILAFEEALYDYFDVHYDNLFETIRTTKDLPEEADLDAAIKAFKDQSNFK</sequence>
<evidence type="ECO:0000255" key="1">
    <source>
        <dbReference type="HAMAP-Rule" id="MF_01346"/>
    </source>
</evidence>
<protein>
    <recommendedName>
        <fullName evidence="1">ATP synthase subunit alpha</fullName>
        <ecNumber evidence="1">7.1.2.2</ecNumber>
    </recommendedName>
    <alternativeName>
        <fullName evidence="1">ATP synthase F1 sector subunit alpha</fullName>
    </alternativeName>
    <alternativeName>
        <fullName evidence="1">F-ATPase subunit alpha</fullName>
    </alternativeName>
</protein>
<accession>Q1JHN7</accession>
<comment type="function">
    <text evidence="1">Produces ATP from ADP in the presence of a proton gradient across the membrane. The alpha chain is a regulatory subunit.</text>
</comment>
<comment type="catalytic activity">
    <reaction evidence="1">
        <text>ATP + H2O + 4 H(+)(in) = ADP + phosphate + 5 H(+)(out)</text>
        <dbReference type="Rhea" id="RHEA:57720"/>
        <dbReference type="ChEBI" id="CHEBI:15377"/>
        <dbReference type="ChEBI" id="CHEBI:15378"/>
        <dbReference type="ChEBI" id="CHEBI:30616"/>
        <dbReference type="ChEBI" id="CHEBI:43474"/>
        <dbReference type="ChEBI" id="CHEBI:456216"/>
        <dbReference type="EC" id="7.1.2.2"/>
    </reaction>
</comment>
<comment type="subunit">
    <text evidence="1">F-type ATPases have 2 components, CF(1) - the catalytic core - and CF(0) - the membrane proton channel. CF(1) has five subunits: alpha(3), beta(3), gamma(1), delta(1), epsilon(1). CF(0) has three main subunits: a(1), b(2) and c(9-12). The alpha and beta chains form an alternating ring which encloses part of the gamma chain. CF(1) is attached to CF(0) by a central stalk formed by the gamma and epsilon chains, while a peripheral stalk is formed by the delta and b chains.</text>
</comment>
<comment type="subcellular location">
    <subcellularLocation>
        <location evidence="1">Cell membrane</location>
        <topology evidence="1">Peripheral membrane protein</topology>
    </subcellularLocation>
</comment>
<comment type="similarity">
    <text evidence="1">Belongs to the ATPase alpha/beta chains family.</text>
</comment>
<keyword id="KW-0066">ATP synthesis</keyword>
<keyword id="KW-0067">ATP-binding</keyword>
<keyword id="KW-1003">Cell membrane</keyword>
<keyword id="KW-0139">CF(1)</keyword>
<keyword id="KW-0375">Hydrogen ion transport</keyword>
<keyword id="KW-0406">Ion transport</keyword>
<keyword id="KW-0472">Membrane</keyword>
<keyword id="KW-0547">Nucleotide-binding</keyword>
<keyword id="KW-1278">Translocase</keyword>
<keyword id="KW-0813">Transport</keyword>
<name>ATPA_STRPD</name>
<organism>
    <name type="scientific">Streptococcus pyogenes serotype M2 (strain MGAS10270)</name>
    <dbReference type="NCBI Taxonomy" id="370552"/>
    <lineage>
        <taxon>Bacteria</taxon>
        <taxon>Bacillati</taxon>
        <taxon>Bacillota</taxon>
        <taxon>Bacilli</taxon>
        <taxon>Lactobacillales</taxon>
        <taxon>Streptococcaceae</taxon>
        <taxon>Streptococcus</taxon>
    </lineage>
</organism>
<proteinExistence type="inferred from homology"/>
<dbReference type="EC" id="7.1.2.2" evidence="1"/>
<dbReference type="EMBL" id="CP000260">
    <property type="protein sequence ID" value="ABF33699.1"/>
    <property type="molecule type" value="Genomic_DNA"/>
</dbReference>
<dbReference type="SMR" id="Q1JHN7"/>
<dbReference type="KEGG" id="sph:MGAS10270_Spy0634"/>
<dbReference type="HOGENOM" id="CLU_010091_2_1_9"/>
<dbReference type="Proteomes" id="UP000002436">
    <property type="component" value="Chromosome"/>
</dbReference>
<dbReference type="GO" id="GO:0005886">
    <property type="term" value="C:plasma membrane"/>
    <property type="evidence" value="ECO:0007669"/>
    <property type="project" value="UniProtKB-SubCell"/>
</dbReference>
<dbReference type="GO" id="GO:0045259">
    <property type="term" value="C:proton-transporting ATP synthase complex"/>
    <property type="evidence" value="ECO:0007669"/>
    <property type="project" value="UniProtKB-KW"/>
</dbReference>
<dbReference type="GO" id="GO:0043531">
    <property type="term" value="F:ADP binding"/>
    <property type="evidence" value="ECO:0007669"/>
    <property type="project" value="TreeGrafter"/>
</dbReference>
<dbReference type="GO" id="GO:0005524">
    <property type="term" value="F:ATP binding"/>
    <property type="evidence" value="ECO:0007669"/>
    <property type="project" value="UniProtKB-UniRule"/>
</dbReference>
<dbReference type="GO" id="GO:0046933">
    <property type="term" value="F:proton-transporting ATP synthase activity, rotational mechanism"/>
    <property type="evidence" value="ECO:0007669"/>
    <property type="project" value="UniProtKB-UniRule"/>
</dbReference>
<dbReference type="CDD" id="cd18113">
    <property type="entry name" value="ATP-synt_F1_alpha_C"/>
    <property type="match status" value="1"/>
</dbReference>
<dbReference type="CDD" id="cd18116">
    <property type="entry name" value="ATP-synt_F1_alpha_N"/>
    <property type="match status" value="1"/>
</dbReference>
<dbReference type="CDD" id="cd01132">
    <property type="entry name" value="F1-ATPase_alpha_CD"/>
    <property type="match status" value="1"/>
</dbReference>
<dbReference type="FunFam" id="1.20.150.20:FF:000001">
    <property type="entry name" value="ATP synthase subunit alpha"/>
    <property type="match status" value="1"/>
</dbReference>
<dbReference type="FunFam" id="2.40.30.20:FF:000001">
    <property type="entry name" value="ATP synthase subunit alpha"/>
    <property type="match status" value="1"/>
</dbReference>
<dbReference type="FunFam" id="3.40.50.300:FF:000002">
    <property type="entry name" value="ATP synthase subunit alpha"/>
    <property type="match status" value="1"/>
</dbReference>
<dbReference type="Gene3D" id="2.40.30.20">
    <property type="match status" value="1"/>
</dbReference>
<dbReference type="Gene3D" id="1.20.150.20">
    <property type="entry name" value="ATP synthase alpha/beta chain, C-terminal domain"/>
    <property type="match status" value="1"/>
</dbReference>
<dbReference type="Gene3D" id="3.40.50.300">
    <property type="entry name" value="P-loop containing nucleotide triphosphate hydrolases"/>
    <property type="match status" value="1"/>
</dbReference>
<dbReference type="HAMAP" id="MF_01346">
    <property type="entry name" value="ATP_synth_alpha_bact"/>
    <property type="match status" value="1"/>
</dbReference>
<dbReference type="InterPro" id="IPR023366">
    <property type="entry name" value="ATP_synth_asu-like_sf"/>
</dbReference>
<dbReference type="InterPro" id="IPR000793">
    <property type="entry name" value="ATP_synth_asu_C"/>
</dbReference>
<dbReference type="InterPro" id="IPR038376">
    <property type="entry name" value="ATP_synth_asu_C_sf"/>
</dbReference>
<dbReference type="InterPro" id="IPR033732">
    <property type="entry name" value="ATP_synth_F1_a_nt-bd_dom"/>
</dbReference>
<dbReference type="InterPro" id="IPR005294">
    <property type="entry name" value="ATP_synth_F1_asu"/>
</dbReference>
<dbReference type="InterPro" id="IPR004100">
    <property type="entry name" value="ATPase_F1/V1/A1_a/bsu_N"/>
</dbReference>
<dbReference type="InterPro" id="IPR036121">
    <property type="entry name" value="ATPase_F1/V1/A1_a/bsu_N_sf"/>
</dbReference>
<dbReference type="InterPro" id="IPR000194">
    <property type="entry name" value="ATPase_F1/V1/A1_a/bsu_nucl-bd"/>
</dbReference>
<dbReference type="InterPro" id="IPR027417">
    <property type="entry name" value="P-loop_NTPase"/>
</dbReference>
<dbReference type="NCBIfam" id="TIGR00962">
    <property type="entry name" value="atpA"/>
    <property type="match status" value="1"/>
</dbReference>
<dbReference type="NCBIfam" id="NF009884">
    <property type="entry name" value="PRK13343.1"/>
    <property type="match status" value="1"/>
</dbReference>
<dbReference type="PANTHER" id="PTHR48082">
    <property type="entry name" value="ATP SYNTHASE SUBUNIT ALPHA, MITOCHONDRIAL"/>
    <property type="match status" value="1"/>
</dbReference>
<dbReference type="PANTHER" id="PTHR48082:SF2">
    <property type="entry name" value="ATP SYNTHASE SUBUNIT ALPHA, MITOCHONDRIAL"/>
    <property type="match status" value="1"/>
</dbReference>
<dbReference type="Pfam" id="PF00006">
    <property type="entry name" value="ATP-synt_ab"/>
    <property type="match status" value="1"/>
</dbReference>
<dbReference type="Pfam" id="PF00306">
    <property type="entry name" value="ATP-synt_ab_C"/>
    <property type="match status" value="1"/>
</dbReference>
<dbReference type="Pfam" id="PF02874">
    <property type="entry name" value="ATP-synt_ab_N"/>
    <property type="match status" value="1"/>
</dbReference>
<dbReference type="PIRSF" id="PIRSF039088">
    <property type="entry name" value="F_ATPase_subunit_alpha"/>
    <property type="match status" value="1"/>
</dbReference>
<dbReference type="SUPFAM" id="SSF47917">
    <property type="entry name" value="C-terminal domain of alpha and beta subunits of F1 ATP synthase"/>
    <property type="match status" value="1"/>
</dbReference>
<dbReference type="SUPFAM" id="SSF50615">
    <property type="entry name" value="N-terminal domain of alpha and beta subunits of F1 ATP synthase"/>
    <property type="match status" value="1"/>
</dbReference>
<dbReference type="SUPFAM" id="SSF52540">
    <property type="entry name" value="P-loop containing nucleoside triphosphate hydrolases"/>
    <property type="match status" value="1"/>
</dbReference>